<feature type="chain" id="PRO_1000137888" description="Bifunctional protein Aas">
    <location>
        <begin position="1"/>
        <end position="719"/>
    </location>
</feature>
<feature type="transmembrane region" description="Helical" evidence="1">
    <location>
        <begin position="258"/>
        <end position="277"/>
    </location>
</feature>
<feature type="transmembrane region" description="Helical" evidence="1">
    <location>
        <begin position="409"/>
        <end position="433"/>
    </location>
</feature>
<feature type="region of interest" description="Acyltransferase">
    <location>
        <begin position="15"/>
        <end position="138"/>
    </location>
</feature>
<feature type="region of interest" description="AMP-binding">
    <location>
        <begin position="233"/>
        <end position="646"/>
    </location>
</feature>
<feature type="active site" evidence="1">
    <location>
        <position position="36"/>
    </location>
</feature>
<name>AAS_ECODH</name>
<reference key="1">
    <citation type="journal article" date="2008" name="J. Bacteriol.">
        <title>The complete genome sequence of Escherichia coli DH10B: insights into the biology of a laboratory workhorse.</title>
        <authorList>
            <person name="Durfee T."/>
            <person name="Nelson R."/>
            <person name="Baldwin S."/>
            <person name="Plunkett G. III"/>
            <person name="Burland V."/>
            <person name="Mau B."/>
            <person name="Petrosino J.F."/>
            <person name="Qin X."/>
            <person name="Muzny D.M."/>
            <person name="Ayele M."/>
            <person name="Gibbs R.A."/>
            <person name="Csorgo B."/>
            <person name="Posfai G."/>
            <person name="Weinstock G.M."/>
            <person name="Blattner F.R."/>
        </authorList>
    </citation>
    <scope>NUCLEOTIDE SEQUENCE [LARGE SCALE GENOMIC DNA]</scope>
    <source>
        <strain>K12 / DH10B</strain>
    </source>
</reference>
<sequence>MLFSFFRNLCRVLYRVRVTGDTQALKGERVLITPNHVSFIDGILLGLFLPVRPVFAVYTSISQQWYMRWLKSFIDFVPLDPTQPMAIKHLVRLVEQGRPVVIFPEGRITTTGSLMKIYDGAGFVAAKSGATVIPVRIEGAELTHFSRLKGLVKRRLFPQITLHILPPTQVAMPDAPRARDRRKIAGEMLHQIMMEARMAVRPRETLYESLLSAMYRFGAGKKCVEDVNFTPDSYRKLLTKTLFVGRILEKYSVEGERIGLMLPNAGISAAVIFGAIARRRMPAMMNYTAGVKGLTSAITAAEIKTIFTSRQFLDKGKLWHLPEQLTQVRWVYLEDLKADVTTADKVWIFAHLLMPRLAQVKQQPEEEALILFTSGSEGHPKGVVHSHKSILANVEQIKTIADFTTNDRFMSALPLFHSFGLTVGLFTPLLTGAEVFLYPSPLHYRIVPELVYDRSCTVLFGTSTFLGHYARFANPYDFYRLRYVVAGAEKLQESTKQLWQDKFGLRILEGYGVTECAPVVSINVPMAAKPGTVGRILPGMDARLLSVPGIEEGGRLQLKGPNIMNGYLRVEKPGVLEVPTAENVRGEMERGWYDTGDIVRFDEQGFVQIQGRAKRFAKIAGEMVSLEMVEQLALGVSPDKVHATAIKSDASKGEALVLFTTDNELTRDKLQQYAREHGVPELAVPRDIRYLKQMPLLGSGKPDFVTLKSWVDEAEQHDE</sequence>
<proteinExistence type="inferred from homology"/>
<accession>B1XDP2</accession>
<keyword id="KW-0012">Acyltransferase</keyword>
<keyword id="KW-0067">ATP-binding</keyword>
<keyword id="KW-0997">Cell inner membrane</keyword>
<keyword id="KW-1003">Cell membrane</keyword>
<keyword id="KW-0436">Ligase</keyword>
<keyword id="KW-0472">Membrane</keyword>
<keyword id="KW-0511">Multifunctional enzyme</keyword>
<keyword id="KW-0547">Nucleotide-binding</keyword>
<keyword id="KW-0808">Transferase</keyword>
<keyword id="KW-0812">Transmembrane</keyword>
<keyword id="KW-1133">Transmembrane helix</keyword>
<comment type="function">
    <text evidence="1">Plays a role in lysophospholipid acylation. Transfers fatty acids to the 1-position via an enzyme-bound acyl-ACP intermediate in the presence of ATP and magnesium. Its physiological function is to regenerate phosphatidylethanolamine from 2-acyl-glycero-3-phosphoethanolamine (2-acyl-GPE) formed by transacylation reactions or degradation by phospholipase A1.</text>
</comment>
<comment type="catalytic activity">
    <reaction evidence="1">
        <text>a 2-acyl-sn-glycero-3-phosphoethanolamine + a fatty acyl-[ACP] = a 1,2-diacyl-sn-glycero-3-phosphoethanolamine + holo-[ACP]</text>
        <dbReference type="Rhea" id="RHEA:10304"/>
        <dbReference type="Rhea" id="RHEA-COMP:9685"/>
        <dbReference type="Rhea" id="RHEA-COMP:14125"/>
        <dbReference type="ChEBI" id="CHEBI:64479"/>
        <dbReference type="ChEBI" id="CHEBI:64612"/>
        <dbReference type="ChEBI" id="CHEBI:65213"/>
        <dbReference type="ChEBI" id="CHEBI:138651"/>
        <dbReference type="EC" id="2.3.1.40"/>
    </reaction>
</comment>
<comment type="catalytic activity">
    <reaction evidence="1">
        <text>a long-chain fatty acid + holo-[ACP] + ATP = a long-chain fatty acyl-[ACP] + AMP + diphosphate</text>
        <dbReference type="Rhea" id="RHEA:45588"/>
        <dbReference type="Rhea" id="RHEA-COMP:9685"/>
        <dbReference type="Rhea" id="RHEA-COMP:12682"/>
        <dbReference type="ChEBI" id="CHEBI:30616"/>
        <dbReference type="ChEBI" id="CHEBI:33019"/>
        <dbReference type="ChEBI" id="CHEBI:57560"/>
        <dbReference type="ChEBI" id="CHEBI:64479"/>
        <dbReference type="ChEBI" id="CHEBI:133243"/>
        <dbReference type="ChEBI" id="CHEBI:456215"/>
        <dbReference type="EC" id="6.2.1.20"/>
    </reaction>
</comment>
<comment type="subcellular location">
    <subcellularLocation>
        <location evidence="1">Cell inner membrane</location>
        <topology evidence="1">Multi-pass membrane protein</topology>
    </subcellularLocation>
</comment>
<comment type="similarity">
    <text evidence="1">In the N-terminal section; belongs to the 2-acyl-GPE acetyltransferase family.</text>
</comment>
<comment type="similarity">
    <text evidence="1">In the C-terminal section; belongs to the ATP-dependent AMP-binding enzyme family.</text>
</comment>
<evidence type="ECO:0000255" key="1">
    <source>
        <dbReference type="HAMAP-Rule" id="MF_01162"/>
    </source>
</evidence>
<gene>
    <name evidence="1" type="primary">aas</name>
    <name type="ordered locus">ECDH10B_3006</name>
</gene>
<dbReference type="EC" id="2.3.1.40" evidence="1"/>
<dbReference type="EC" id="6.2.1.20" evidence="1"/>
<dbReference type="EMBL" id="CP000948">
    <property type="protein sequence ID" value="ACB03946.1"/>
    <property type="molecule type" value="Genomic_DNA"/>
</dbReference>
<dbReference type="RefSeq" id="WP_000899054.1">
    <property type="nucleotide sequence ID" value="NC_010473.1"/>
</dbReference>
<dbReference type="SMR" id="B1XDP2"/>
<dbReference type="KEGG" id="ecd:ECDH10B_3006"/>
<dbReference type="HOGENOM" id="CLU_000022_59_8_6"/>
<dbReference type="GO" id="GO:0005886">
    <property type="term" value="C:plasma membrane"/>
    <property type="evidence" value="ECO:0007669"/>
    <property type="project" value="UniProtKB-SubCell"/>
</dbReference>
<dbReference type="GO" id="GO:0008779">
    <property type="term" value="F:acyl-[acyl-carrier-protein]-phospholipid O-acyltransferase activity"/>
    <property type="evidence" value="ECO:0007669"/>
    <property type="project" value="UniProtKB-UniRule"/>
</dbReference>
<dbReference type="GO" id="GO:0005524">
    <property type="term" value="F:ATP binding"/>
    <property type="evidence" value="ECO:0007669"/>
    <property type="project" value="UniProtKB-KW"/>
</dbReference>
<dbReference type="GO" id="GO:0008922">
    <property type="term" value="F:long-chain fatty acid [acyl-carrier-protein] ligase activity"/>
    <property type="evidence" value="ECO:0007669"/>
    <property type="project" value="UniProtKB-UniRule"/>
</dbReference>
<dbReference type="GO" id="GO:0031956">
    <property type="term" value="F:medium-chain fatty acid-CoA ligase activity"/>
    <property type="evidence" value="ECO:0007669"/>
    <property type="project" value="TreeGrafter"/>
</dbReference>
<dbReference type="GO" id="GO:0006631">
    <property type="term" value="P:fatty acid metabolic process"/>
    <property type="evidence" value="ECO:0007669"/>
    <property type="project" value="InterPro"/>
</dbReference>
<dbReference type="GO" id="GO:0008654">
    <property type="term" value="P:phospholipid biosynthetic process"/>
    <property type="evidence" value="ECO:0007669"/>
    <property type="project" value="InterPro"/>
</dbReference>
<dbReference type="CDD" id="cd05909">
    <property type="entry name" value="AAS_C"/>
    <property type="match status" value="1"/>
</dbReference>
<dbReference type="CDD" id="cd07989">
    <property type="entry name" value="LPLAT_AGPAT-like"/>
    <property type="match status" value="1"/>
</dbReference>
<dbReference type="FunFam" id="3.30.300.30:FF:000009">
    <property type="entry name" value="Bifunctional protein Aas"/>
    <property type="match status" value="1"/>
</dbReference>
<dbReference type="FunFam" id="3.40.50.12780:FF:000009">
    <property type="entry name" value="Bifunctional protein Aas"/>
    <property type="match status" value="1"/>
</dbReference>
<dbReference type="Gene3D" id="3.30.300.30">
    <property type="match status" value="1"/>
</dbReference>
<dbReference type="Gene3D" id="3.40.50.12780">
    <property type="entry name" value="N-terminal domain of ligase-like"/>
    <property type="match status" value="1"/>
</dbReference>
<dbReference type="HAMAP" id="MF_01162">
    <property type="entry name" value="Aas"/>
    <property type="match status" value="1"/>
</dbReference>
<dbReference type="InterPro" id="IPR023775">
    <property type="entry name" value="Aas"/>
</dbReference>
<dbReference type="InterPro" id="IPR045851">
    <property type="entry name" value="AMP-bd_C_sf"/>
</dbReference>
<dbReference type="InterPro" id="IPR020845">
    <property type="entry name" value="AMP-binding_CS"/>
</dbReference>
<dbReference type="InterPro" id="IPR000873">
    <property type="entry name" value="AMP-dep_synth/lig_dom"/>
</dbReference>
<dbReference type="InterPro" id="IPR042099">
    <property type="entry name" value="ANL_N_sf"/>
</dbReference>
<dbReference type="InterPro" id="IPR002123">
    <property type="entry name" value="Plipid/glycerol_acylTrfase"/>
</dbReference>
<dbReference type="NCBIfam" id="NF005959">
    <property type="entry name" value="PRK08043.1"/>
    <property type="match status" value="1"/>
</dbReference>
<dbReference type="PANTHER" id="PTHR43201">
    <property type="entry name" value="ACYL-COA SYNTHETASE"/>
    <property type="match status" value="1"/>
</dbReference>
<dbReference type="PANTHER" id="PTHR43201:SF8">
    <property type="entry name" value="ACYL-COA SYNTHETASE FAMILY MEMBER 3"/>
    <property type="match status" value="1"/>
</dbReference>
<dbReference type="Pfam" id="PF01553">
    <property type="entry name" value="Acyltransferase"/>
    <property type="match status" value="1"/>
</dbReference>
<dbReference type="Pfam" id="PF00501">
    <property type="entry name" value="AMP-binding"/>
    <property type="match status" value="1"/>
</dbReference>
<dbReference type="SMART" id="SM00563">
    <property type="entry name" value="PlsC"/>
    <property type="match status" value="1"/>
</dbReference>
<dbReference type="SUPFAM" id="SSF56801">
    <property type="entry name" value="Acetyl-CoA synthetase-like"/>
    <property type="match status" value="1"/>
</dbReference>
<dbReference type="SUPFAM" id="SSF69593">
    <property type="entry name" value="Glycerol-3-phosphate (1)-acyltransferase"/>
    <property type="match status" value="1"/>
</dbReference>
<dbReference type="PROSITE" id="PS00455">
    <property type="entry name" value="AMP_BINDING"/>
    <property type="match status" value="1"/>
</dbReference>
<protein>
    <recommendedName>
        <fullName evidence="1">Bifunctional protein Aas</fullName>
    </recommendedName>
    <domain>
        <recommendedName>
            <fullName evidence="1">2-acylglycerophosphoethanolamine acyltransferase</fullName>
            <ecNumber evidence="1">2.3.1.40</ecNumber>
        </recommendedName>
        <alternativeName>
            <fullName evidence="1">2-acyl-GPE acyltransferase</fullName>
        </alternativeName>
        <alternativeName>
            <fullName evidence="1">Acyl-[acyl-carrier-protein]--phospholipid O-acyltransferase</fullName>
        </alternativeName>
    </domain>
    <domain>
        <recommendedName>
            <fullName evidence="1">Acyl-[acyl-carrier-protein] synthetase</fullName>
            <ecNumber evidence="1">6.2.1.20</ecNumber>
        </recommendedName>
        <alternativeName>
            <fullName evidence="1">Acyl-ACP synthetase</fullName>
        </alternativeName>
        <alternativeName>
            <fullName evidence="1">Long-chain-fatty-acid--[acyl-carrier-protein] ligase</fullName>
        </alternativeName>
    </domain>
</protein>
<organism>
    <name type="scientific">Escherichia coli (strain K12 / DH10B)</name>
    <dbReference type="NCBI Taxonomy" id="316385"/>
    <lineage>
        <taxon>Bacteria</taxon>
        <taxon>Pseudomonadati</taxon>
        <taxon>Pseudomonadota</taxon>
        <taxon>Gammaproteobacteria</taxon>
        <taxon>Enterobacterales</taxon>
        <taxon>Enterobacteriaceae</taxon>
        <taxon>Escherichia</taxon>
    </lineage>
</organism>